<comment type="function">
    <text evidence="1">Involved in the gluconeogenesis. Catalyzes stereospecifically the conversion of dihydroxyacetone phosphate (DHAP) to D-glyceraldehyde-3-phosphate (G3P).</text>
</comment>
<comment type="catalytic activity">
    <reaction evidence="1">
        <text>D-glyceraldehyde 3-phosphate = dihydroxyacetone phosphate</text>
        <dbReference type="Rhea" id="RHEA:18585"/>
        <dbReference type="ChEBI" id="CHEBI:57642"/>
        <dbReference type="ChEBI" id="CHEBI:59776"/>
        <dbReference type="EC" id="5.3.1.1"/>
    </reaction>
</comment>
<comment type="pathway">
    <text evidence="1">Carbohydrate biosynthesis; gluconeogenesis.</text>
</comment>
<comment type="pathway">
    <text evidence="1">Carbohydrate degradation; glycolysis; D-glyceraldehyde 3-phosphate from glycerone phosphate: step 1/1.</text>
</comment>
<comment type="subunit">
    <text evidence="1">Homodimer.</text>
</comment>
<comment type="subcellular location">
    <subcellularLocation>
        <location evidence="1">Cytoplasm</location>
    </subcellularLocation>
</comment>
<comment type="similarity">
    <text evidence="1">Belongs to the triosephosphate isomerase family.</text>
</comment>
<reference key="1">
    <citation type="journal article" date="2002" name="J. Bacteriol.">
        <title>Genome sequence and analysis of the oral bacterium Fusobacterium nucleatum strain ATCC 25586.</title>
        <authorList>
            <person name="Kapatral V."/>
            <person name="Anderson I."/>
            <person name="Ivanova N."/>
            <person name="Reznik G."/>
            <person name="Los T."/>
            <person name="Lykidis A."/>
            <person name="Bhattacharyya A."/>
            <person name="Bartman A."/>
            <person name="Gardner W."/>
            <person name="Grechkin G."/>
            <person name="Zhu L."/>
            <person name="Vasieva O."/>
            <person name="Chu L."/>
            <person name="Kogan Y."/>
            <person name="Chaga O."/>
            <person name="Goltsman E."/>
            <person name="Bernal A."/>
            <person name="Larsen N."/>
            <person name="D'Souza M."/>
            <person name="Walunas T."/>
            <person name="Pusch G."/>
            <person name="Haselkorn R."/>
            <person name="Fonstein M."/>
            <person name="Kyrpides N.C."/>
            <person name="Overbeek R."/>
        </authorList>
    </citation>
    <scope>NUCLEOTIDE SEQUENCE [LARGE SCALE GENOMIC DNA]</scope>
    <source>
        <strain>ATCC 25586 / DSM 15643 / BCRC 10681 / CIP 101130 / JCM 8532 / KCTC 2640 / LMG 13131 / VPI 4355</strain>
    </source>
</reference>
<protein>
    <recommendedName>
        <fullName evidence="1">Triosephosphate isomerase</fullName>
        <shortName evidence="1">TIM</shortName>
        <shortName evidence="1">TPI</shortName>
        <ecNumber evidence="1">5.3.1.1</ecNumber>
    </recommendedName>
    <alternativeName>
        <fullName evidence="1">Triose-phosphate isomerase</fullName>
    </alternativeName>
</protein>
<name>TPIS_FUSNN</name>
<accession>Q8RDX7</accession>
<evidence type="ECO:0000255" key="1">
    <source>
        <dbReference type="HAMAP-Rule" id="MF_00147"/>
    </source>
</evidence>
<sequence>MRRLVIAGNWKMYKNNKEAVETLTQLKDLTRDVKNVDIVIGAPFTCLSDAVKIVEGSNVKIAAENVYPKIEGAYTGEVSPKMLKDIGVTYVILGHSERREYFKESDEFINQKVKAVLEIGMKPILCIGEKLEDREGGKTLEVLAKQIKEGLVDLSKEDAEKTIVAYEPVWAIGTGKTATPEMAQETHKEIRNVLAEMFGKDVADKMIIQYGGSMKPENAKDLLSQEDIDGGLVGGASLKADSFFEIIKAGN</sequence>
<proteinExistence type="inferred from homology"/>
<keyword id="KW-0963">Cytoplasm</keyword>
<keyword id="KW-0312">Gluconeogenesis</keyword>
<keyword id="KW-0324">Glycolysis</keyword>
<keyword id="KW-0413">Isomerase</keyword>
<keyword id="KW-1185">Reference proteome</keyword>
<dbReference type="EC" id="5.3.1.1" evidence="1"/>
<dbReference type="EMBL" id="AE009951">
    <property type="protein sequence ID" value="AAL95562.1"/>
    <property type="molecule type" value="Genomic_DNA"/>
</dbReference>
<dbReference type="RefSeq" id="NP_604263.1">
    <property type="nucleotide sequence ID" value="NC_003454.1"/>
</dbReference>
<dbReference type="RefSeq" id="WP_005902187.1">
    <property type="nucleotide sequence ID" value="NZ_OZ209243.1"/>
</dbReference>
<dbReference type="SMR" id="Q8RDX7"/>
<dbReference type="FunCoup" id="Q8RDX7">
    <property type="interactions" value="327"/>
</dbReference>
<dbReference type="STRING" id="190304.FN1366"/>
<dbReference type="PaxDb" id="190304-FN1366"/>
<dbReference type="EnsemblBacteria" id="AAL95562">
    <property type="protein sequence ID" value="AAL95562"/>
    <property type="gene ID" value="FN1366"/>
</dbReference>
<dbReference type="GeneID" id="79784338"/>
<dbReference type="KEGG" id="fnu:FN1366"/>
<dbReference type="PATRIC" id="fig|190304.8.peg.1931"/>
<dbReference type="eggNOG" id="COG0149">
    <property type="taxonomic scope" value="Bacteria"/>
</dbReference>
<dbReference type="HOGENOM" id="CLU_024251_2_3_0"/>
<dbReference type="InParanoid" id="Q8RDX7"/>
<dbReference type="BioCyc" id="FNUC190304:G1FZS-1938-MONOMER"/>
<dbReference type="UniPathway" id="UPA00109">
    <property type="reaction ID" value="UER00189"/>
</dbReference>
<dbReference type="UniPathway" id="UPA00138"/>
<dbReference type="Proteomes" id="UP000002521">
    <property type="component" value="Chromosome"/>
</dbReference>
<dbReference type="GO" id="GO:0005829">
    <property type="term" value="C:cytosol"/>
    <property type="evidence" value="ECO:0000318"/>
    <property type="project" value="GO_Central"/>
</dbReference>
<dbReference type="GO" id="GO:0004807">
    <property type="term" value="F:triose-phosphate isomerase activity"/>
    <property type="evidence" value="ECO:0000318"/>
    <property type="project" value="GO_Central"/>
</dbReference>
<dbReference type="GO" id="GO:0006094">
    <property type="term" value="P:gluconeogenesis"/>
    <property type="evidence" value="ECO:0000318"/>
    <property type="project" value="GO_Central"/>
</dbReference>
<dbReference type="GO" id="GO:0046166">
    <property type="term" value="P:glyceraldehyde-3-phosphate biosynthetic process"/>
    <property type="evidence" value="ECO:0000318"/>
    <property type="project" value="GO_Central"/>
</dbReference>
<dbReference type="GO" id="GO:0019563">
    <property type="term" value="P:glycerol catabolic process"/>
    <property type="evidence" value="ECO:0000318"/>
    <property type="project" value="GO_Central"/>
</dbReference>
<dbReference type="GO" id="GO:0006096">
    <property type="term" value="P:glycolytic process"/>
    <property type="evidence" value="ECO:0000318"/>
    <property type="project" value="GO_Central"/>
</dbReference>
<dbReference type="CDD" id="cd00311">
    <property type="entry name" value="TIM"/>
    <property type="match status" value="1"/>
</dbReference>
<dbReference type="FunFam" id="3.20.20.70:FF:000020">
    <property type="entry name" value="Triosephosphate isomerase"/>
    <property type="match status" value="1"/>
</dbReference>
<dbReference type="Gene3D" id="3.20.20.70">
    <property type="entry name" value="Aldolase class I"/>
    <property type="match status" value="1"/>
</dbReference>
<dbReference type="HAMAP" id="MF_00147_B">
    <property type="entry name" value="TIM_B"/>
    <property type="match status" value="1"/>
</dbReference>
<dbReference type="InterPro" id="IPR013785">
    <property type="entry name" value="Aldolase_TIM"/>
</dbReference>
<dbReference type="InterPro" id="IPR035990">
    <property type="entry name" value="TIM_sf"/>
</dbReference>
<dbReference type="InterPro" id="IPR022896">
    <property type="entry name" value="TrioseP_Isoase_bac/euk"/>
</dbReference>
<dbReference type="InterPro" id="IPR000652">
    <property type="entry name" value="Triosephosphate_isomerase"/>
</dbReference>
<dbReference type="InterPro" id="IPR020861">
    <property type="entry name" value="Triosephosphate_isomerase_AS"/>
</dbReference>
<dbReference type="NCBIfam" id="TIGR00419">
    <property type="entry name" value="tim"/>
    <property type="match status" value="1"/>
</dbReference>
<dbReference type="PANTHER" id="PTHR21139">
    <property type="entry name" value="TRIOSEPHOSPHATE ISOMERASE"/>
    <property type="match status" value="1"/>
</dbReference>
<dbReference type="PANTHER" id="PTHR21139:SF42">
    <property type="entry name" value="TRIOSEPHOSPHATE ISOMERASE"/>
    <property type="match status" value="1"/>
</dbReference>
<dbReference type="Pfam" id="PF00121">
    <property type="entry name" value="TIM"/>
    <property type="match status" value="1"/>
</dbReference>
<dbReference type="SUPFAM" id="SSF51351">
    <property type="entry name" value="Triosephosphate isomerase (TIM)"/>
    <property type="match status" value="1"/>
</dbReference>
<dbReference type="PROSITE" id="PS00171">
    <property type="entry name" value="TIM_1"/>
    <property type="match status" value="1"/>
</dbReference>
<dbReference type="PROSITE" id="PS51440">
    <property type="entry name" value="TIM_2"/>
    <property type="match status" value="1"/>
</dbReference>
<feature type="chain" id="PRO_0000090223" description="Triosephosphate isomerase">
    <location>
        <begin position="1"/>
        <end position="251"/>
    </location>
</feature>
<feature type="active site" description="Electrophile" evidence="1">
    <location>
        <position position="95"/>
    </location>
</feature>
<feature type="active site" description="Proton acceptor" evidence="1">
    <location>
        <position position="167"/>
    </location>
</feature>
<feature type="binding site" evidence="1">
    <location>
        <begin position="9"/>
        <end position="11"/>
    </location>
    <ligand>
        <name>substrate</name>
    </ligand>
</feature>
<feature type="binding site" evidence="1">
    <location>
        <position position="173"/>
    </location>
    <ligand>
        <name>substrate</name>
    </ligand>
</feature>
<feature type="binding site" evidence="1">
    <location>
        <position position="213"/>
    </location>
    <ligand>
        <name>substrate</name>
    </ligand>
</feature>
<feature type="binding site" evidence="1">
    <location>
        <begin position="234"/>
        <end position="235"/>
    </location>
    <ligand>
        <name>substrate</name>
    </ligand>
</feature>
<gene>
    <name evidence="1" type="primary">tpiA</name>
    <name type="ordered locus">FN1366</name>
</gene>
<organism>
    <name type="scientific">Fusobacterium nucleatum subsp. nucleatum (strain ATCC 25586 / DSM 15643 / BCRC 10681 / CIP 101130 / JCM 8532 / KCTC 2640 / LMG 13131 / VPI 4355)</name>
    <dbReference type="NCBI Taxonomy" id="190304"/>
    <lineage>
        <taxon>Bacteria</taxon>
        <taxon>Fusobacteriati</taxon>
        <taxon>Fusobacteriota</taxon>
        <taxon>Fusobacteriia</taxon>
        <taxon>Fusobacteriales</taxon>
        <taxon>Fusobacteriaceae</taxon>
        <taxon>Fusobacterium</taxon>
    </lineage>
</organism>